<geneLocation type="mitochondrion"/>
<gene>
    <name type="primary">MT-CYB</name>
    <name type="synonym">COB</name>
    <name type="synonym">CYTB</name>
    <name type="synonym">MTCYB</name>
</gene>
<keyword id="KW-0249">Electron transport</keyword>
<keyword id="KW-0349">Heme</keyword>
<keyword id="KW-0408">Iron</keyword>
<keyword id="KW-0472">Membrane</keyword>
<keyword id="KW-0479">Metal-binding</keyword>
<keyword id="KW-0496">Mitochondrion</keyword>
<keyword id="KW-0999">Mitochondrion inner membrane</keyword>
<keyword id="KW-0679">Respiratory chain</keyword>
<keyword id="KW-0812">Transmembrane</keyword>
<keyword id="KW-1133">Transmembrane helix</keyword>
<keyword id="KW-0813">Transport</keyword>
<keyword id="KW-0830">Ubiquinone</keyword>
<feature type="chain" id="PRO_0000061616" description="Cytochrome b">
    <location>
        <begin position="1"/>
        <end position="379"/>
    </location>
</feature>
<feature type="transmembrane region" description="Helical" evidence="2">
    <location>
        <begin position="33"/>
        <end position="53"/>
    </location>
</feature>
<feature type="transmembrane region" description="Helical" evidence="2">
    <location>
        <begin position="77"/>
        <end position="98"/>
    </location>
</feature>
<feature type="transmembrane region" description="Helical" evidence="2">
    <location>
        <begin position="113"/>
        <end position="133"/>
    </location>
</feature>
<feature type="transmembrane region" description="Helical" evidence="2">
    <location>
        <begin position="178"/>
        <end position="198"/>
    </location>
</feature>
<feature type="transmembrane region" description="Helical" evidence="2">
    <location>
        <begin position="226"/>
        <end position="246"/>
    </location>
</feature>
<feature type="transmembrane region" description="Helical" evidence="2">
    <location>
        <begin position="288"/>
        <end position="308"/>
    </location>
</feature>
<feature type="transmembrane region" description="Helical" evidence="2">
    <location>
        <begin position="320"/>
        <end position="340"/>
    </location>
</feature>
<feature type="transmembrane region" description="Helical" evidence="2">
    <location>
        <begin position="347"/>
        <end position="367"/>
    </location>
</feature>
<feature type="binding site" description="axial binding residue" evidence="2">
    <location>
        <position position="83"/>
    </location>
    <ligand>
        <name>heme b</name>
        <dbReference type="ChEBI" id="CHEBI:60344"/>
        <label>b562</label>
    </ligand>
    <ligandPart>
        <name>Fe</name>
        <dbReference type="ChEBI" id="CHEBI:18248"/>
    </ligandPart>
</feature>
<feature type="binding site" description="axial binding residue" evidence="2">
    <location>
        <position position="97"/>
    </location>
    <ligand>
        <name>heme b</name>
        <dbReference type="ChEBI" id="CHEBI:60344"/>
        <label>b566</label>
    </ligand>
    <ligandPart>
        <name>Fe</name>
        <dbReference type="ChEBI" id="CHEBI:18248"/>
    </ligandPart>
</feature>
<feature type="binding site" description="axial binding residue" evidence="2">
    <location>
        <position position="182"/>
    </location>
    <ligand>
        <name>heme b</name>
        <dbReference type="ChEBI" id="CHEBI:60344"/>
        <label>b562</label>
    </ligand>
    <ligandPart>
        <name>Fe</name>
        <dbReference type="ChEBI" id="CHEBI:18248"/>
    </ligandPart>
</feature>
<feature type="binding site" description="axial binding residue" evidence="2">
    <location>
        <position position="196"/>
    </location>
    <ligand>
        <name>heme b</name>
        <dbReference type="ChEBI" id="CHEBI:60344"/>
        <label>b566</label>
    </ligand>
    <ligandPart>
        <name>Fe</name>
        <dbReference type="ChEBI" id="CHEBI:18248"/>
    </ligandPart>
</feature>
<feature type="binding site" evidence="2">
    <location>
        <position position="201"/>
    </location>
    <ligand>
        <name>a ubiquinone</name>
        <dbReference type="ChEBI" id="CHEBI:16389"/>
    </ligand>
</feature>
<feature type="sequence variant" description="In strain: Isolate 1B and Isolate Timor sea.">
    <original>T</original>
    <variation>S</variation>
    <location>
        <position position="60"/>
    </location>
</feature>
<feature type="sequence variant" description="In strain: Isolate 1B and Isolate Timor sea.">
    <original>M</original>
    <variation>I</variation>
    <location>
        <position position="98"/>
    </location>
</feature>
<feature type="sequence variant" description="In strain: Isolate Timor sea.">
    <original>S</original>
    <variation>N</variation>
    <location>
        <position position="263"/>
    </location>
</feature>
<feature type="sequence variant" description="In strain: Isolate 1B and Isolate Timor sea.">
    <original>P</original>
    <variation>A</variation>
    <location>
        <position position="266"/>
    </location>
</feature>
<feature type="sequence variant" description="In strain: Isolate 1B and Isolate Timor sea.">
    <original>I</original>
    <variation>V</variation>
    <location>
        <position position="300"/>
    </location>
</feature>
<feature type="sequence variant" description="In strain: Isolate 1B and Isolate Timor sea.">
    <original>V</original>
    <variation>T</variation>
    <location>
        <position position="327"/>
    </location>
</feature>
<evidence type="ECO:0000250" key="1"/>
<evidence type="ECO:0000250" key="2">
    <source>
        <dbReference type="UniProtKB" id="P00157"/>
    </source>
</evidence>
<evidence type="ECO:0000255" key="3">
    <source>
        <dbReference type="PROSITE-ProRule" id="PRU00967"/>
    </source>
</evidence>
<evidence type="ECO:0000255" key="4">
    <source>
        <dbReference type="PROSITE-ProRule" id="PRU00968"/>
    </source>
</evidence>
<name>CYB_STELO</name>
<protein>
    <recommendedName>
        <fullName>Cytochrome b</fullName>
    </recommendedName>
    <alternativeName>
        <fullName>Complex III subunit 3</fullName>
    </alternativeName>
    <alternativeName>
        <fullName>Complex III subunit III</fullName>
    </alternativeName>
    <alternativeName>
        <fullName>Cytochrome b-c1 complex subunit 3</fullName>
    </alternativeName>
    <alternativeName>
        <fullName>Ubiquinol-cytochrome-c reductase complex cytochrome b subunit</fullName>
    </alternativeName>
</protein>
<accession>P24962</accession>
<accession>P24963</accession>
<accession>Q9TDJ5</accession>
<reference key="1">
    <citation type="journal article" date="1991" name="J. Mol. Evol.">
        <title>Evolution of the cytochrome b gene of mammals.</title>
        <authorList>
            <person name="Irwin D.M."/>
            <person name="Kocher T.D."/>
            <person name="Wilson A.C."/>
        </authorList>
    </citation>
    <scope>NUCLEOTIDE SEQUENCE [GENOMIC DNA]</scope>
    <source>
        <strain>Isolate 1A</strain>
        <strain>Isolate 1B</strain>
    </source>
</reference>
<reference key="2">
    <citation type="journal article" date="1999" name="Mar. Mamm. Sci.">
        <title>Phylogenetic relationships among the delphinid cetaceans based on full cytochrome b sequences.</title>
        <authorList>
            <person name="LeDuc R.G."/>
            <person name="Perrin W.F."/>
            <person name="Dizon A.E."/>
        </authorList>
    </citation>
    <scope>NUCLEOTIDE SEQUENCE [GENOMIC DNA]</scope>
    <source>
        <strain>Isolate Timor Sea</strain>
    </source>
</reference>
<dbReference type="EMBL" id="X56292">
    <property type="protein sequence ID" value="CAA39739.1"/>
    <property type="molecule type" value="Genomic_DNA"/>
</dbReference>
<dbReference type="EMBL" id="X56293">
    <property type="protein sequence ID" value="CAA39740.1"/>
    <property type="molecule type" value="Genomic_DNA"/>
</dbReference>
<dbReference type="EMBL" id="AF084103">
    <property type="protein sequence ID" value="AAD54480.1"/>
    <property type="molecule type" value="Genomic_DNA"/>
</dbReference>
<dbReference type="PIR" id="S17417">
    <property type="entry name" value="S17417"/>
</dbReference>
<dbReference type="SMR" id="P24962"/>
<dbReference type="GO" id="GO:0005743">
    <property type="term" value="C:mitochondrial inner membrane"/>
    <property type="evidence" value="ECO:0007669"/>
    <property type="project" value="UniProtKB-SubCell"/>
</dbReference>
<dbReference type="GO" id="GO:0045275">
    <property type="term" value="C:respiratory chain complex III"/>
    <property type="evidence" value="ECO:0007669"/>
    <property type="project" value="InterPro"/>
</dbReference>
<dbReference type="GO" id="GO:0046872">
    <property type="term" value="F:metal ion binding"/>
    <property type="evidence" value="ECO:0007669"/>
    <property type="project" value="UniProtKB-KW"/>
</dbReference>
<dbReference type="GO" id="GO:0008121">
    <property type="term" value="F:ubiquinol-cytochrome-c reductase activity"/>
    <property type="evidence" value="ECO:0007669"/>
    <property type="project" value="InterPro"/>
</dbReference>
<dbReference type="GO" id="GO:0006122">
    <property type="term" value="P:mitochondrial electron transport, ubiquinol to cytochrome c"/>
    <property type="evidence" value="ECO:0007669"/>
    <property type="project" value="TreeGrafter"/>
</dbReference>
<dbReference type="CDD" id="cd00290">
    <property type="entry name" value="cytochrome_b_C"/>
    <property type="match status" value="1"/>
</dbReference>
<dbReference type="CDD" id="cd00284">
    <property type="entry name" value="Cytochrome_b_N"/>
    <property type="match status" value="1"/>
</dbReference>
<dbReference type="FunFam" id="1.20.810.10:FF:000002">
    <property type="entry name" value="Cytochrome b"/>
    <property type="match status" value="1"/>
</dbReference>
<dbReference type="Gene3D" id="1.20.810.10">
    <property type="entry name" value="Cytochrome Bc1 Complex, Chain C"/>
    <property type="match status" value="1"/>
</dbReference>
<dbReference type="InterPro" id="IPR005798">
    <property type="entry name" value="Cyt_b/b6_C"/>
</dbReference>
<dbReference type="InterPro" id="IPR036150">
    <property type="entry name" value="Cyt_b/b6_C_sf"/>
</dbReference>
<dbReference type="InterPro" id="IPR005797">
    <property type="entry name" value="Cyt_b/b6_N"/>
</dbReference>
<dbReference type="InterPro" id="IPR027387">
    <property type="entry name" value="Cytb/b6-like_sf"/>
</dbReference>
<dbReference type="InterPro" id="IPR030689">
    <property type="entry name" value="Cytochrome_b"/>
</dbReference>
<dbReference type="InterPro" id="IPR048260">
    <property type="entry name" value="Cytochrome_b_C_euk/bac"/>
</dbReference>
<dbReference type="InterPro" id="IPR048259">
    <property type="entry name" value="Cytochrome_b_N_euk/bac"/>
</dbReference>
<dbReference type="InterPro" id="IPR016174">
    <property type="entry name" value="Di-haem_cyt_TM"/>
</dbReference>
<dbReference type="PANTHER" id="PTHR19271">
    <property type="entry name" value="CYTOCHROME B"/>
    <property type="match status" value="1"/>
</dbReference>
<dbReference type="PANTHER" id="PTHR19271:SF16">
    <property type="entry name" value="CYTOCHROME B"/>
    <property type="match status" value="1"/>
</dbReference>
<dbReference type="Pfam" id="PF00032">
    <property type="entry name" value="Cytochrom_B_C"/>
    <property type="match status" value="1"/>
</dbReference>
<dbReference type="Pfam" id="PF00033">
    <property type="entry name" value="Cytochrome_B"/>
    <property type="match status" value="1"/>
</dbReference>
<dbReference type="PIRSF" id="PIRSF038885">
    <property type="entry name" value="COB"/>
    <property type="match status" value="1"/>
</dbReference>
<dbReference type="SUPFAM" id="SSF81648">
    <property type="entry name" value="a domain/subunit of cytochrome bc1 complex (Ubiquinol-cytochrome c reductase)"/>
    <property type="match status" value="1"/>
</dbReference>
<dbReference type="SUPFAM" id="SSF81342">
    <property type="entry name" value="Transmembrane di-heme cytochromes"/>
    <property type="match status" value="1"/>
</dbReference>
<dbReference type="PROSITE" id="PS51003">
    <property type="entry name" value="CYTB_CTER"/>
    <property type="match status" value="1"/>
</dbReference>
<dbReference type="PROSITE" id="PS51002">
    <property type="entry name" value="CYTB_NTER"/>
    <property type="match status" value="1"/>
</dbReference>
<proteinExistence type="inferred from homology"/>
<comment type="function">
    <text evidence="2">Component of the ubiquinol-cytochrome c reductase complex (complex III or cytochrome b-c1 complex) that is part of the mitochondrial respiratory chain. The b-c1 complex mediates electron transfer from ubiquinol to cytochrome c. Contributes to the generation of a proton gradient across the mitochondrial membrane that is then used for ATP synthesis.</text>
</comment>
<comment type="cofactor">
    <cofactor evidence="2">
        <name>heme b</name>
        <dbReference type="ChEBI" id="CHEBI:60344"/>
    </cofactor>
    <text evidence="2">Binds 2 heme b groups non-covalently.</text>
</comment>
<comment type="subunit">
    <text evidence="2">The cytochrome bc1 complex contains 11 subunits: 3 respiratory subunits (MT-CYB, CYC1 and UQCRFS1), 2 core proteins (UQCRC1 and UQCRC2) and 6 low-molecular weight proteins (UQCRH/QCR6, UQCRB/QCR7, UQCRQ/QCR8, UQCR10/QCR9, UQCR11/QCR10 and a cleavage product of UQCRFS1). This cytochrome bc1 complex then forms a dimer.</text>
</comment>
<comment type="subcellular location">
    <subcellularLocation>
        <location evidence="2">Mitochondrion inner membrane</location>
        <topology evidence="2">Multi-pass membrane protein</topology>
    </subcellularLocation>
</comment>
<comment type="miscellaneous">
    <text evidence="1">Heme 1 (or BL or b562) is low-potential and absorbs at about 562 nm, and heme 2 (or BH or b566) is high-potential and absorbs at about 566 nm.</text>
</comment>
<comment type="similarity">
    <text evidence="3 4">Belongs to the cytochrome b family.</text>
</comment>
<comment type="caution">
    <text evidence="2">The full-length protein contains only eight transmembrane helices, not nine as predicted by bioinformatics tools.</text>
</comment>
<organism>
    <name type="scientific">Stenella longirostris</name>
    <name type="common">Spinner dolphin</name>
    <name type="synonym">Delphinus longirostris</name>
    <dbReference type="NCBI Taxonomy" id="9736"/>
    <lineage>
        <taxon>Eukaryota</taxon>
        <taxon>Metazoa</taxon>
        <taxon>Chordata</taxon>
        <taxon>Craniata</taxon>
        <taxon>Vertebrata</taxon>
        <taxon>Euteleostomi</taxon>
        <taxon>Mammalia</taxon>
        <taxon>Eutheria</taxon>
        <taxon>Laurasiatheria</taxon>
        <taxon>Artiodactyla</taxon>
        <taxon>Whippomorpha</taxon>
        <taxon>Cetacea</taxon>
        <taxon>Odontoceti</taxon>
        <taxon>Delphinidae</taxon>
        <taxon>Stenella</taxon>
    </lineage>
</organism>
<sequence>MTNIRKTHPLMKILNDAFIDLPTPSNISSWWNFGSLLGLCLIMQILTGLFLAMHYTPDTTTAFSSVAHICRDVNYGWFIRYLHANGASMFFICLYAHMGRGLYYGSYMFQETWNIGVLLLLTVMATAFVGYVLPWGQMSFWGATVITNLLSAIPYIGTTLVEWIWGGFSVDKATLTRFFAFHFILPFIITALAAVHLLFLHETGSNNPTGIPSNMDMIPFHPYYTIKDILGGLLLILTLLALTLFTPDLLGDPDNYTPANPLSTPPHIKPEWYFLFAYAILRSIPNKLGGVLALLLSILILIFIPMLQTSKQRSMMFRPFSQLLFWVLIADLLTLTWIGGQPVEHPYIIVGQLASILYFLLILVLMPTAGLIENKLLKW</sequence>